<comment type="function">
    <text evidence="1">Cell wall formation. Catalyzes the transfer of a GlcNAc subunit on undecaprenyl-pyrophosphoryl-MurNAc-pentapeptide (lipid intermediate I) to form undecaprenyl-pyrophosphoryl-MurNAc-(pentapeptide)GlcNAc (lipid intermediate II).</text>
</comment>
<comment type="catalytic activity">
    <reaction evidence="1">
        <text>di-trans,octa-cis-undecaprenyl diphospho-N-acetyl-alpha-D-muramoyl-L-alanyl-D-glutamyl-meso-2,6-diaminopimeloyl-D-alanyl-D-alanine + UDP-N-acetyl-alpha-D-glucosamine = di-trans,octa-cis-undecaprenyl diphospho-[N-acetyl-alpha-D-glucosaminyl-(1-&gt;4)]-N-acetyl-alpha-D-muramoyl-L-alanyl-D-glutamyl-meso-2,6-diaminopimeloyl-D-alanyl-D-alanine + UDP + H(+)</text>
        <dbReference type="Rhea" id="RHEA:31227"/>
        <dbReference type="ChEBI" id="CHEBI:15378"/>
        <dbReference type="ChEBI" id="CHEBI:57705"/>
        <dbReference type="ChEBI" id="CHEBI:58223"/>
        <dbReference type="ChEBI" id="CHEBI:61387"/>
        <dbReference type="ChEBI" id="CHEBI:61388"/>
        <dbReference type="EC" id="2.4.1.227"/>
    </reaction>
</comment>
<comment type="pathway">
    <text evidence="1">Cell wall biogenesis; peptidoglycan biosynthesis.</text>
</comment>
<comment type="subcellular location">
    <subcellularLocation>
        <location evidence="1">Cell inner membrane</location>
        <topology evidence="1">Peripheral membrane protein</topology>
        <orientation evidence="1">Cytoplasmic side</orientation>
    </subcellularLocation>
</comment>
<comment type="similarity">
    <text evidence="1">Belongs to the glycosyltransferase 28 family. MurG subfamily.</text>
</comment>
<organism>
    <name type="scientific">Pseudothermotoga lettingae (strain ATCC BAA-301 / DSM 14385 / NBRC 107922 / TMO)</name>
    <name type="common">Thermotoga lettingae</name>
    <dbReference type="NCBI Taxonomy" id="416591"/>
    <lineage>
        <taxon>Bacteria</taxon>
        <taxon>Thermotogati</taxon>
        <taxon>Thermotogota</taxon>
        <taxon>Thermotogae</taxon>
        <taxon>Thermotogales</taxon>
        <taxon>Thermotogaceae</taxon>
        <taxon>Pseudothermotoga</taxon>
    </lineage>
</organism>
<gene>
    <name evidence="1" type="primary">murG</name>
    <name type="ordered locus">Tlet_0639</name>
</gene>
<proteinExistence type="inferred from homology"/>
<dbReference type="EC" id="2.4.1.227" evidence="1"/>
<dbReference type="EMBL" id="CP000812">
    <property type="protein sequence ID" value="ABV33205.1"/>
    <property type="molecule type" value="Genomic_DNA"/>
</dbReference>
<dbReference type="RefSeq" id="WP_012002686.1">
    <property type="nucleotide sequence ID" value="NZ_BSDV01000001.1"/>
</dbReference>
<dbReference type="SMR" id="A8F4X1"/>
<dbReference type="STRING" id="416591.Tlet_0639"/>
<dbReference type="CAZy" id="GT28">
    <property type="family name" value="Glycosyltransferase Family 28"/>
</dbReference>
<dbReference type="KEGG" id="tle:Tlet_0639"/>
<dbReference type="eggNOG" id="COG0707">
    <property type="taxonomic scope" value="Bacteria"/>
</dbReference>
<dbReference type="HOGENOM" id="CLU_037404_0_1_0"/>
<dbReference type="OrthoDB" id="9808936at2"/>
<dbReference type="UniPathway" id="UPA00219"/>
<dbReference type="Proteomes" id="UP000002016">
    <property type="component" value="Chromosome"/>
</dbReference>
<dbReference type="GO" id="GO:0005886">
    <property type="term" value="C:plasma membrane"/>
    <property type="evidence" value="ECO:0007669"/>
    <property type="project" value="UniProtKB-SubCell"/>
</dbReference>
<dbReference type="GO" id="GO:0051991">
    <property type="term" value="F:UDP-N-acetyl-D-glucosamine:N-acetylmuramoyl-L-alanyl-D-glutamyl-meso-2,6-diaminopimelyl-D-alanyl-D-alanine-diphosphoundecaprenol 4-beta-N-acetylglucosaminlytransferase activity"/>
    <property type="evidence" value="ECO:0007669"/>
    <property type="project" value="RHEA"/>
</dbReference>
<dbReference type="GO" id="GO:0050511">
    <property type="term" value="F:undecaprenyldiphospho-muramoylpentapeptide beta-N-acetylglucosaminyltransferase activity"/>
    <property type="evidence" value="ECO:0007669"/>
    <property type="project" value="UniProtKB-UniRule"/>
</dbReference>
<dbReference type="GO" id="GO:0005975">
    <property type="term" value="P:carbohydrate metabolic process"/>
    <property type="evidence" value="ECO:0007669"/>
    <property type="project" value="InterPro"/>
</dbReference>
<dbReference type="GO" id="GO:0051301">
    <property type="term" value="P:cell division"/>
    <property type="evidence" value="ECO:0007669"/>
    <property type="project" value="UniProtKB-KW"/>
</dbReference>
<dbReference type="GO" id="GO:0071555">
    <property type="term" value="P:cell wall organization"/>
    <property type="evidence" value="ECO:0007669"/>
    <property type="project" value="UniProtKB-KW"/>
</dbReference>
<dbReference type="GO" id="GO:0030259">
    <property type="term" value="P:lipid glycosylation"/>
    <property type="evidence" value="ECO:0007669"/>
    <property type="project" value="UniProtKB-UniRule"/>
</dbReference>
<dbReference type="GO" id="GO:0009252">
    <property type="term" value="P:peptidoglycan biosynthetic process"/>
    <property type="evidence" value="ECO:0007669"/>
    <property type="project" value="UniProtKB-UniRule"/>
</dbReference>
<dbReference type="GO" id="GO:0008360">
    <property type="term" value="P:regulation of cell shape"/>
    <property type="evidence" value="ECO:0007669"/>
    <property type="project" value="UniProtKB-KW"/>
</dbReference>
<dbReference type="CDD" id="cd03785">
    <property type="entry name" value="GT28_MurG"/>
    <property type="match status" value="1"/>
</dbReference>
<dbReference type="Gene3D" id="3.40.50.2000">
    <property type="entry name" value="Glycogen Phosphorylase B"/>
    <property type="match status" value="2"/>
</dbReference>
<dbReference type="HAMAP" id="MF_00033">
    <property type="entry name" value="MurG"/>
    <property type="match status" value="1"/>
</dbReference>
<dbReference type="InterPro" id="IPR006009">
    <property type="entry name" value="GlcNAc_MurG"/>
</dbReference>
<dbReference type="InterPro" id="IPR007235">
    <property type="entry name" value="Glyco_trans_28_C"/>
</dbReference>
<dbReference type="InterPro" id="IPR004276">
    <property type="entry name" value="GlycoTrans_28_N"/>
</dbReference>
<dbReference type="PANTHER" id="PTHR21015:SF22">
    <property type="entry name" value="GLYCOSYLTRANSFERASE"/>
    <property type="match status" value="1"/>
</dbReference>
<dbReference type="PANTHER" id="PTHR21015">
    <property type="entry name" value="UDP-N-ACETYLGLUCOSAMINE--N-ACETYLMURAMYL-(PENTAPEPTIDE) PYROPHOSPHORYL-UNDECAPRENOL N-ACETYLGLUCOSAMINE TRANSFERASE 1"/>
    <property type="match status" value="1"/>
</dbReference>
<dbReference type="Pfam" id="PF04101">
    <property type="entry name" value="Glyco_tran_28_C"/>
    <property type="match status" value="1"/>
</dbReference>
<dbReference type="Pfam" id="PF03033">
    <property type="entry name" value="Glyco_transf_28"/>
    <property type="match status" value="1"/>
</dbReference>
<dbReference type="SUPFAM" id="SSF53756">
    <property type="entry name" value="UDP-Glycosyltransferase/glycogen phosphorylase"/>
    <property type="match status" value="1"/>
</dbReference>
<reference key="1">
    <citation type="submission" date="2007-08" db="EMBL/GenBank/DDBJ databases">
        <title>Complete sequence of Thermotoga lettingae TMO.</title>
        <authorList>
            <consortium name="US DOE Joint Genome Institute"/>
            <person name="Copeland A."/>
            <person name="Lucas S."/>
            <person name="Lapidus A."/>
            <person name="Barry K."/>
            <person name="Glavina del Rio T."/>
            <person name="Dalin E."/>
            <person name="Tice H."/>
            <person name="Pitluck S."/>
            <person name="Foster B."/>
            <person name="Bruce D."/>
            <person name="Schmutz J."/>
            <person name="Larimer F."/>
            <person name="Land M."/>
            <person name="Hauser L."/>
            <person name="Kyrpides N."/>
            <person name="Mikhailova N."/>
            <person name="Nelson K."/>
            <person name="Gogarten J.P."/>
            <person name="Noll K."/>
            <person name="Richardson P."/>
        </authorList>
    </citation>
    <scope>NUCLEOTIDE SEQUENCE [LARGE SCALE GENOMIC DNA]</scope>
    <source>
        <strain>ATCC BAA-301 / DSM 14385 / NBRC 107922 / TMO</strain>
    </source>
</reference>
<keyword id="KW-0131">Cell cycle</keyword>
<keyword id="KW-0132">Cell division</keyword>
<keyword id="KW-0997">Cell inner membrane</keyword>
<keyword id="KW-1003">Cell membrane</keyword>
<keyword id="KW-0133">Cell shape</keyword>
<keyword id="KW-0961">Cell wall biogenesis/degradation</keyword>
<keyword id="KW-0328">Glycosyltransferase</keyword>
<keyword id="KW-0472">Membrane</keyword>
<keyword id="KW-0573">Peptidoglycan synthesis</keyword>
<keyword id="KW-1185">Reference proteome</keyword>
<keyword id="KW-0808">Transferase</keyword>
<evidence type="ECO:0000255" key="1">
    <source>
        <dbReference type="HAMAP-Rule" id="MF_00033"/>
    </source>
</evidence>
<accession>A8F4X1</accession>
<feature type="chain" id="PRO_1000057257" description="UDP-N-acetylglucosamine--N-acetylmuramyl-(pentapeptide) pyrophosphoryl-undecaprenol N-acetylglucosamine transferase">
    <location>
        <begin position="1"/>
        <end position="339"/>
    </location>
</feature>
<feature type="binding site" evidence="1">
    <location>
        <begin position="10"/>
        <end position="12"/>
    </location>
    <ligand>
        <name>UDP-N-acetyl-alpha-D-glucosamine</name>
        <dbReference type="ChEBI" id="CHEBI:57705"/>
    </ligand>
</feature>
<feature type="binding site" evidence="1">
    <location>
        <position position="124"/>
    </location>
    <ligand>
        <name>UDP-N-acetyl-alpha-D-glucosamine</name>
        <dbReference type="ChEBI" id="CHEBI:57705"/>
    </ligand>
</feature>
<feature type="binding site" evidence="1">
    <location>
        <position position="168"/>
    </location>
    <ligand>
        <name>UDP-N-acetyl-alpha-D-glucosamine</name>
        <dbReference type="ChEBI" id="CHEBI:57705"/>
    </ligand>
</feature>
<feature type="binding site" evidence="1">
    <location>
        <position position="188"/>
    </location>
    <ligand>
        <name>UDP-N-acetyl-alpha-D-glucosamine</name>
        <dbReference type="ChEBI" id="CHEBI:57705"/>
    </ligand>
</feature>
<feature type="binding site" evidence="1">
    <location>
        <position position="235"/>
    </location>
    <ligand>
        <name>UDP-N-acetyl-alpha-D-glucosamine</name>
        <dbReference type="ChEBI" id="CHEBI:57705"/>
    </ligand>
</feature>
<feature type="binding site" evidence="1">
    <location>
        <position position="280"/>
    </location>
    <ligand>
        <name>UDP-N-acetyl-alpha-D-glucosamine</name>
        <dbReference type="ChEBI" id="CHEBI:57705"/>
    </ligand>
</feature>
<name>MURG_PSELT</name>
<sequence length="339" mass="37881">MRISAAGGGTGGHLYPAVSILEKLAEMKKLNVTYFCLEKGIESKILPLEHPEYKLIKIDLKGLERPIWKPSNFTRLLKISQSESIIALEIKQCDFGLMTGGYISYPVGKVCKKLKKPFFIQEQNVVPGLANKALSLSAKKIFVAFDKTVEFFPKSVRNKILVTGNPVREKDNEEMLFGKDYVLVLGGSRGSEFINNLMEEVYKVEHNLKFVHSTGSKEWVDRLSIFENVKAVDYIYNASAAWKGARAVIARAGATTIGEMLYYGLPGILVPWDGATGSHQLYNALEIEKMGKALVLKECDATVSTLLKKLYQVLEMDKKPKMKINPAEIIAKTILEELK</sequence>
<protein>
    <recommendedName>
        <fullName evidence="1">UDP-N-acetylglucosamine--N-acetylmuramyl-(pentapeptide) pyrophosphoryl-undecaprenol N-acetylglucosamine transferase</fullName>
        <ecNumber evidence="1">2.4.1.227</ecNumber>
    </recommendedName>
    <alternativeName>
        <fullName evidence="1">Undecaprenyl-PP-MurNAc-pentapeptide-UDPGlcNAc GlcNAc transferase</fullName>
    </alternativeName>
</protein>